<evidence type="ECO:0000255" key="1">
    <source>
        <dbReference type="HAMAP-Rule" id="MF_02227"/>
    </source>
</evidence>
<name>RPE_MYCPN</name>
<reference key="1">
    <citation type="journal article" date="1996" name="Nucleic Acids Res.">
        <title>Complete sequence analysis of the genome of the bacterium Mycoplasma pneumoniae.</title>
        <authorList>
            <person name="Himmelreich R."/>
            <person name="Hilbert H."/>
            <person name="Plagens H."/>
            <person name="Pirkl E."/>
            <person name="Li B.-C."/>
            <person name="Herrmann R."/>
        </authorList>
    </citation>
    <scope>NUCLEOTIDE SEQUENCE [LARGE SCALE GENOMIC DNA]</scope>
    <source>
        <strain>ATCC 29342 / M129 / Subtype 1</strain>
    </source>
</reference>
<protein>
    <recommendedName>
        <fullName evidence="1">Ribulose-phosphate 3-epimerase</fullName>
        <ecNumber evidence="1">5.1.3.1</ecNumber>
    </recommendedName>
</protein>
<feature type="chain" id="PRO_0000171577" description="Ribulose-phosphate 3-epimerase">
    <location>
        <begin position="1"/>
        <end position="215"/>
    </location>
</feature>
<feature type="active site" description="Proton acceptor" evidence="1">
    <location>
        <position position="40"/>
    </location>
</feature>
<feature type="active site" description="Proton donor" evidence="1">
    <location>
        <position position="175"/>
    </location>
</feature>
<feature type="binding site" evidence="1">
    <location>
        <position position="13"/>
    </location>
    <ligand>
        <name>substrate</name>
    </ligand>
</feature>
<feature type="binding site" evidence="1">
    <location>
        <position position="38"/>
    </location>
    <ligand>
        <name>a divalent metal cation</name>
        <dbReference type="ChEBI" id="CHEBI:60240"/>
    </ligand>
</feature>
<feature type="binding site" evidence="1">
    <location>
        <position position="40"/>
    </location>
    <ligand>
        <name>a divalent metal cation</name>
        <dbReference type="ChEBI" id="CHEBI:60240"/>
    </ligand>
</feature>
<feature type="binding site" evidence="1">
    <location>
        <position position="69"/>
    </location>
    <ligand>
        <name>a divalent metal cation</name>
        <dbReference type="ChEBI" id="CHEBI:60240"/>
    </ligand>
</feature>
<feature type="binding site" evidence="1">
    <location>
        <position position="69"/>
    </location>
    <ligand>
        <name>substrate</name>
    </ligand>
</feature>
<feature type="binding site" evidence="1">
    <location>
        <begin position="175"/>
        <end position="177"/>
    </location>
    <ligand>
        <name>substrate</name>
    </ligand>
</feature>
<feature type="binding site" evidence="1">
    <location>
        <position position="175"/>
    </location>
    <ligand>
        <name>a divalent metal cation</name>
        <dbReference type="ChEBI" id="CHEBI:60240"/>
    </ligand>
</feature>
<feature type="binding site" evidence="1">
    <location>
        <begin position="196"/>
        <end position="197"/>
    </location>
    <ligand>
        <name>substrate</name>
    </ligand>
</feature>
<sequence>MLNLVVNREIAFSLLPLLHQFDRKLLEQFFADGLRLIHYDVMDHFVDNTVFQGEHLDELQQIGFQVNVHLMVQALEQILPVYLHHQAVKRISFHVEPFDIPTIKHFIAQIKQAGKQVGLAFKFTTPLVNYERLVQQLDFVTLMSVPPGKGGQAFNSAVFNNLKQAHKYHCSIEIDGGIKLDNIHQIQDDVNFIVMGSGFIKLERWQRQQLLKTNQ</sequence>
<gene>
    <name evidence="1" type="primary">rpe</name>
    <name type="ordered locus">MPN_251</name>
    <name type="ORF">MP581</name>
</gene>
<accession>P75522</accession>
<keyword id="KW-0119">Carbohydrate metabolism</keyword>
<keyword id="KW-0413">Isomerase</keyword>
<keyword id="KW-0479">Metal-binding</keyword>
<keyword id="KW-1185">Reference proteome</keyword>
<comment type="function">
    <text evidence="1">Catalyzes the reversible epimerization of D-ribulose 5-phosphate to D-xylulose 5-phosphate.</text>
</comment>
<comment type="catalytic activity">
    <reaction evidence="1">
        <text>D-ribulose 5-phosphate = D-xylulose 5-phosphate</text>
        <dbReference type="Rhea" id="RHEA:13677"/>
        <dbReference type="ChEBI" id="CHEBI:57737"/>
        <dbReference type="ChEBI" id="CHEBI:58121"/>
        <dbReference type="EC" id="5.1.3.1"/>
    </reaction>
</comment>
<comment type="cofactor">
    <cofactor evidence="1">
        <name>a divalent metal cation</name>
        <dbReference type="ChEBI" id="CHEBI:60240"/>
    </cofactor>
    <text evidence="1">Binds 1 divalent metal cation per subunit.</text>
</comment>
<comment type="pathway">
    <text evidence="1">Carbohydrate degradation.</text>
</comment>
<comment type="similarity">
    <text evidence="1">Belongs to the ribulose-phosphate 3-epimerase family.</text>
</comment>
<organism>
    <name type="scientific">Mycoplasma pneumoniae (strain ATCC 29342 / M129 / Subtype 1)</name>
    <name type="common">Mycoplasmoides pneumoniae</name>
    <dbReference type="NCBI Taxonomy" id="272634"/>
    <lineage>
        <taxon>Bacteria</taxon>
        <taxon>Bacillati</taxon>
        <taxon>Mycoplasmatota</taxon>
        <taxon>Mycoplasmoidales</taxon>
        <taxon>Mycoplasmoidaceae</taxon>
        <taxon>Mycoplasmoides</taxon>
    </lineage>
</organism>
<proteinExistence type="inferred from homology"/>
<dbReference type="EC" id="5.1.3.1" evidence="1"/>
<dbReference type="EMBL" id="U00089">
    <property type="protein sequence ID" value="AAB96229.1"/>
    <property type="molecule type" value="Genomic_DNA"/>
</dbReference>
<dbReference type="PIR" id="S73907">
    <property type="entry name" value="S73907"/>
</dbReference>
<dbReference type="RefSeq" id="NP_109939.1">
    <property type="nucleotide sequence ID" value="NC_000912.1"/>
</dbReference>
<dbReference type="RefSeq" id="WP_010874608.1">
    <property type="nucleotide sequence ID" value="NZ_OU342337.1"/>
</dbReference>
<dbReference type="SMR" id="P75522"/>
<dbReference type="IntAct" id="P75522">
    <property type="interactions" value="2"/>
</dbReference>
<dbReference type="STRING" id="272634.MPN_251"/>
<dbReference type="EnsemblBacteria" id="AAB96229">
    <property type="protein sequence ID" value="AAB96229"/>
    <property type="gene ID" value="MPN_251"/>
</dbReference>
<dbReference type="KEGG" id="mpn:MPN_251"/>
<dbReference type="PATRIC" id="fig|272634.6.peg.270"/>
<dbReference type="HOGENOM" id="CLU_054856_2_2_14"/>
<dbReference type="OrthoDB" id="1645589at2"/>
<dbReference type="BioCyc" id="MetaCyc:MONOMER-582"/>
<dbReference type="BioCyc" id="MPNE272634:G1GJ3-396-MONOMER"/>
<dbReference type="Proteomes" id="UP000000808">
    <property type="component" value="Chromosome"/>
</dbReference>
<dbReference type="GO" id="GO:0004750">
    <property type="term" value="F:D-ribulose-phosphate 3-epimerase activity"/>
    <property type="evidence" value="ECO:0007669"/>
    <property type="project" value="UniProtKB-UniRule"/>
</dbReference>
<dbReference type="GO" id="GO:0046872">
    <property type="term" value="F:metal ion binding"/>
    <property type="evidence" value="ECO:0007669"/>
    <property type="project" value="UniProtKB-UniRule"/>
</dbReference>
<dbReference type="GO" id="GO:0019323">
    <property type="term" value="P:pentose catabolic process"/>
    <property type="evidence" value="ECO:0007669"/>
    <property type="project" value="UniProtKB-UniRule"/>
</dbReference>
<dbReference type="GO" id="GO:0006098">
    <property type="term" value="P:pentose-phosphate shunt"/>
    <property type="evidence" value="ECO:0007669"/>
    <property type="project" value="InterPro"/>
</dbReference>
<dbReference type="Gene3D" id="3.20.20.70">
    <property type="entry name" value="Aldolase class I"/>
    <property type="match status" value="1"/>
</dbReference>
<dbReference type="HAMAP" id="MF_02227">
    <property type="entry name" value="RPE"/>
    <property type="match status" value="1"/>
</dbReference>
<dbReference type="InterPro" id="IPR013785">
    <property type="entry name" value="Aldolase_TIM"/>
</dbReference>
<dbReference type="InterPro" id="IPR026019">
    <property type="entry name" value="Ribul_P_3_epim"/>
</dbReference>
<dbReference type="InterPro" id="IPR000056">
    <property type="entry name" value="Ribul_P_3_epim-like"/>
</dbReference>
<dbReference type="InterPro" id="IPR011060">
    <property type="entry name" value="RibuloseP-bd_barrel"/>
</dbReference>
<dbReference type="NCBIfam" id="NF004076">
    <property type="entry name" value="PRK05581.1-4"/>
    <property type="match status" value="1"/>
</dbReference>
<dbReference type="PANTHER" id="PTHR11749">
    <property type="entry name" value="RIBULOSE-5-PHOSPHATE-3-EPIMERASE"/>
    <property type="match status" value="1"/>
</dbReference>
<dbReference type="Pfam" id="PF00834">
    <property type="entry name" value="Ribul_P_3_epim"/>
    <property type="match status" value="1"/>
</dbReference>
<dbReference type="SUPFAM" id="SSF51366">
    <property type="entry name" value="Ribulose-phoshate binding barrel"/>
    <property type="match status" value="1"/>
</dbReference>
<dbReference type="PROSITE" id="PS01085">
    <property type="entry name" value="RIBUL_P_3_EPIMER_1"/>
    <property type="match status" value="1"/>
</dbReference>
<dbReference type="PROSITE" id="PS01086">
    <property type="entry name" value="RIBUL_P_3_EPIMER_2"/>
    <property type="match status" value="1"/>
</dbReference>